<gene>
    <name type="primary">modA</name>
    <name type="synonym">ganab</name>
    <name type="ORF">DDB_G0269154</name>
</gene>
<proteinExistence type="inferred from homology"/>
<sequence length="943" mass="108772">MRKLVILIILSIVCSLFIGSIESVDTSKFKTCKDSHFCKRNRVSHEVGVMNEMKSKQNFNIVEGSIKLVKQENTIYFDLQEQNQKSNLLTMKLEIYEGGIVRMRAQEKEPLLNKQRYQVQDVLLDTIKTVPIQWKQEPSKQSNTFSFKHGEKECCYVLVQLVPFKLDVYIMNELAITTNSDNLFHFEPISDKPQPLPPKEKKSEEENKEANQEEDNNNNNNDNNEEQQVSTEGYWEERFGSHQDSKPNGPMSIGMDFTFVGSSHVYGIPEHTTRLSLKSTTGNGINEQPYRLYNLDVFEYEIDKTMALYGHVPLMISHDTKKTVGVFWLNAAETFVDIEDVTTPVSPSKKTHWISESGIIDVFYLTGPTPSTIFKQYAYLTGTTALPQMFSLGYHQCKWNYKSEDDVKQVDNGFDENHIPYDVIWLDIEHTDGKRYFTWDNNNFPTPADMQNIIGAKHRKMVTIVDPHIKRDNNYYVHSEATSKGYYIKNKDGNDYDGWCWPGSSSYLDFTNPEIRKWWATQFGYDKYKGSTPNLYIWNDMNEPSVFNGPEVSMHKDAKHHGGFEHRDVHNLYGYYYHMASADGLVQRNADQNDRPFVLSRAFYAGSQRIGAIWTGDNSAQWSHLEISNPMLLSMNLAGITFSGADVGGFFGNPDAELLTRWYQAGAFQPFFRGHAHLDSRRREPWLFNEPYTTIIREAIVKRYSYLPLWYTTFYQNTLNGAPVMRPLWVQYPKEANLFDVDDHYLIGDSLLVKPVTQQSCKTMKVLLPGQSVNEIWYDVDTEKPINAGVIEIDTPLEKIPVYQRGGSIISKKERVRRSTYQMRDDPYTIRIALDSSKSAQGQLYIDDEHSFDYKKGKFLYRQFTFKDNVLSFSDASNKSSTSYKPNVTIEKIVILGVQKPHSITCNITGKEKLSFEYDSTLSKLTIRKPDLLVDTDFIIKLN</sequence>
<accession>Q94502</accession>
<accession>Q55DG2</accession>
<evidence type="ECO:0000250" key="1"/>
<evidence type="ECO:0000255" key="2"/>
<evidence type="ECO:0000255" key="3">
    <source>
        <dbReference type="PROSITE-ProRule" id="PRU10066"/>
    </source>
</evidence>
<evidence type="ECO:0000256" key="4">
    <source>
        <dbReference type="SAM" id="MobiDB-lite"/>
    </source>
</evidence>
<evidence type="ECO:0000269" key="5">
    <source>
    </source>
</evidence>
<evidence type="ECO:0000305" key="6"/>
<organism>
    <name type="scientific">Dictyostelium discoideum</name>
    <name type="common">Social amoeba</name>
    <dbReference type="NCBI Taxonomy" id="44689"/>
    <lineage>
        <taxon>Eukaryota</taxon>
        <taxon>Amoebozoa</taxon>
        <taxon>Evosea</taxon>
        <taxon>Eumycetozoa</taxon>
        <taxon>Dictyostelia</taxon>
        <taxon>Dictyosteliales</taxon>
        <taxon>Dictyosteliaceae</taxon>
        <taxon>Dictyostelium</taxon>
    </lineage>
</organism>
<name>GANAB_DICDI</name>
<feature type="signal peptide" evidence="2">
    <location>
        <begin position="1"/>
        <end position="23"/>
    </location>
</feature>
<feature type="chain" id="PRO_0000328193" description="Neutral alpha-glucosidase AB">
    <location>
        <begin position="24"/>
        <end position="943"/>
    </location>
</feature>
<feature type="region of interest" description="Disordered" evidence="4">
    <location>
        <begin position="186"/>
        <end position="231"/>
    </location>
</feature>
<feature type="compositionally biased region" description="Basic and acidic residues" evidence="4">
    <location>
        <begin position="198"/>
        <end position="211"/>
    </location>
</feature>
<feature type="active site" description="Nucleophile" evidence="3">
    <location>
        <position position="540"/>
    </location>
</feature>
<feature type="active site" evidence="1">
    <location>
        <position position="543"/>
    </location>
</feature>
<feature type="active site" description="Proton donor" evidence="1">
    <location>
        <position position="617"/>
    </location>
</feature>
<feature type="glycosylation site" description="N-linked (GlcNAc...) asparagine" evidence="2">
    <location>
        <position position="878"/>
    </location>
</feature>
<feature type="glycosylation site" description="N-linked (GlcNAc...) asparagine" evidence="2">
    <location>
        <position position="887"/>
    </location>
</feature>
<feature type="glycosylation site" description="N-linked (GlcNAc...) asparagine" evidence="2">
    <location>
        <position position="907"/>
    </location>
</feature>
<reference key="1">
    <citation type="journal article" date="1997" name="Dev. Genet.">
        <title>Consequences of disrupting the gene that encodes alpha-glucosidase II in the N-linked oligosaccharide biosynthesis pathway of Dictyostelium discoideum.</title>
        <authorList>
            <person name="Freeze H.H."/>
            <person name="Lammertz M."/>
            <person name="Iranfar N."/>
            <person name="Fuller D."/>
            <person name="Panneerselvam K."/>
            <person name="Loomis W.F."/>
        </authorList>
    </citation>
    <scope>NUCLEOTIDE SEQUENCE [GENOMIC DNA]</scope>
    <scope>FUNCTION</scope>
    <scope>SUBCELLULAR LOCATION</scope>
    <source>
        <strain>AX4</strain>
    </source>
</reference>
<reference key="2">
    <citation type="journal article" date="2005" name="Nature">
        <title>The genome of the social amoeba Dictyostelium discoideum.</title>
        <authorList>
            <person name="Eichinger L."/>
            <person name="Pachebat J.A."/>
            <person name="Gloeckner G."/>
            <person name="Rajandream M.A."/>
            <person name="Sucgang R."/>
            <person name="Berriman M."/>
            <person name="Song J."/>
            <person name="Olsen R."/>
            <person name="Szafranski K."/>
            <person name="Xu Q."/>
            <person name="Tunggal B."/>
            <person name="Kummerfeld S."/>
            <person name="Madera M."/>
            <person name="Konfortov B.A."/>
            <person name="Rivero F."/>
            <person name="Bankier A.T."/>
            <person name="Lehmann R."/>
            <person name="Hamlin N."/>
            <person name="Davies R."/>
            <person name="Gaudet P."/>
            <person name="Fey P."/>
            <person name="Pilcher K."/>
            <person name="Chen G."/>
            <person name="Saunders D."/>
            <person name="Sodergren E.J."/>
            <person name="Davis P."/>
            <person name="Kerhornou A."/>
            <person name="Nie X."/>
            <person name="Hall N."/>
            <person name="Anjard C."/>
            <person name="Hemphill L."/>
            <person name="Bason N."/>
            <person name="Farbrother P."/>
            <person name="Desany B."/>
            <person name="Just E."/>
            <person name="Morio T."/>
            <person name="Rost R."/>
            <person name="Churcher C.M."/>
            <person name="Cooper J."/>
            <person name="Haydock S."/>
            <person name="van Driessche N."/>
            <person name="Cronin A."/>
            <person name="Goodhead I."/>
            <person name="Muzny D.M."/>
            <person name="Mourier T."/>
            <person name="Pain A."/>
            <person name="Lu M."/>
            <person name="Harper D."/>
            <person name="Lindsay R."/>
            <person name="Hauser H."/>
            <person name="James K.D."/>
            <person name="Quiles M."/>
            <person name="Madan Babu M."/>
            <person name="Saito T."/>
            <person name="Buchrieser C."/>
            <person name="Wardroper A."/>
            <person name="Felder M."/>
            <person name="Thangavelu M."/>
            <person name="Johnson D."/>
            <person name="Knights A."/>
            <person name="Loulseged H."/>
            <person name="Mungall K.L."/>
            <person name="Oliver K."/>
            <person name="Price C."/>
            <person name="Quail M.A."/>
            <person name="Urushihara H."/>
            <person name="Hernandez J."/>
            <person name="Rabbinowitsch E."/>
            <person name="Steffen D."/>
            <person name="Sanders M."/>
            <person name="Ma J."/>
            <person name="Kohara Y."/>
            <person name="Sharp S."/>
            <person name="Simmonds M.N."/>
            <person name="Spiegler S."/>
            <person name="Tivey A."/>
            <person name="Sugano S."/>
            <person name="White B."/>
            <person name="Walker D."/>
            <person name="Woodward J.R."/>
            <person name="Winckler T."/>
            <person name="Tanaka Y."/>
            <person name="Shaulsky G."/>
            <person name="Schleicher M."/>
            <person name="Weinstock G.M."/>
            <person name="Rosenthal A."/>
            <person name="Cox E.C."/>
            <person name="Chisholm R.L."/>
            <person name="Gibbs R.A."/>
            <person name="Loomis W.F."/>
            <person name="Platzer M."/>
            <person name="Kay R.R."/>
            <person name="Williams J.G."/>
            <person name="Dear P.H."/>
            <person name="Noegel A.A."/>
            <person name="Barrell B.G."/>
            <person name="Kuspa A."/>
        </authorList>
    </citation>
    <scope>NUCLEOTIDE SEQUENCE [LARGE SCALE GENOMIC DNA]</scope>
    <source>
        <strain>AX4</strain>
    </source>
</reference>
<comment type="function">
    <text evidence="1 5">Cleaves sequentially the 2 innermost alpha-1,3-linked glucose residues from N-linked oligosaccharides on newly synthesized glycoproteins.</text>
</comment>
<comment type="catalytic activity">
    <reaction>
        <text>N(4)-(alpha-D-Glc-(1-&gt;3)-alpha-D-Man-(1-&gt;2)-alpha-D-Man-(1-&gt;2)-alpha-D-Man-(1-&gt;3)-[alpha-D-Man-(1-&gt;2)-alpha-D-Man-(1-&gt;3)-[alpha-D-Man-(1-&gt;2)-alpha-D-Man-(1-&gt;6)]-alpha-D-Man-(1-&gt;6)]-beta-D-Man-(1-&gt;4)-beta-D-GlcNAc-(1-&gt;4)-beta-D-GlcNAc)-L-asparaginyl-[protein] + H2O = N(4)-(alpha-D-Man-(1-&gt;2)-alpha-D-Man-(1-&gt;2)-alpha-D-Man-(1-&gt;3)-[alpha-D-Man-(1-&gt;2)-alpha-D-Man-(1-&gt;3)-[alpha-D-Man-(1-&gt;2)-alpha-D-Man-(1-&gt;6)]-alpha-D-Man-(1-&gt;6)]-beta-D-Man-(1-&gt;4)-beta-D-GlcNAc-(1-&gt;4)-beta-D-GlcNAc)-L-asparaginyl-[protein] (N-glucan mannose isomer 9A1,2,3B1,2,3) + beta-D-glucose</text>
        <dbReference type="Rhea" id="RHEA:56000"/>
        <dbReference type="Rhea" id="RHEA-COMP:14356"/>
        <dbReference type="Rhea" id="RHEA-COMP:14357"/>
        <dbReference type="ChEBI" id="CHEBI:15377"/>
        <dbReference type="ChEBI" id="CHEBI:15903"/>
        <dbReference type="ChEBI" id="CHEBI:59080"/>
        <dbReference type="ChEBI" id="CHEBI:139493"/>
        <dbReference type="EC" id="3.2.1.207"/>
    </reaction>
</comment>
<comment type="catalytic activity">
    <reaction>
        <text>N(4)-(alpha-D-Glc-(1-&gt;3)-alpha-D-Glc-(1-&gt;3)-alpha-D-Man-(1-&gt;2)-alpha-D-Man-(1-&gt;2)-alpha-D-Man-(1-&gt;3)-[alpha-D-Man-(1-&gt;2)-alpha-D-Man-(1-&gt;3)-[alpha-D-Man-(1-&gt;2)-alpha-D-Man-(1-&gt;6)]-alpha-D-Man-(1-&gt;6)]-beta-D-Man-(1-&gt;4)-beta-D-GlcNAc-(1-&gt;4)-beta-D-GlcNAc)-L-asparaginyl-[protein] + H2O = N(4)-(alpha-D-Glc-(1-&gt;3)-alpha-D-Man-(1-&gt;2)-alpha-D-Man-(1-&gt;2)-alpha-D-Man-(1-&gt;3)-[alpha-D-Man-(1-&gt;2)-alpha-D-Man-(1-&gt;3)-[alpha-D-Man-(1-&gt;2)-alpha-D-Man-(1-&gt;6)]-alpha-D-Man-(1-&gt;6)]-beta-D-Man-(1-&gt;4)-beta-D-GlcNAc-(1-&gt;4)-beta-D-GlcNAc)-L-asparaginyl-[protein] + beta-D-glucose</text>
        <dbReference type="Rhea" id="RHEA:55996"/>
        <dbReference type="Rhea" id="RHEA-COMP:14355"/>
        <dbReference type="Rhea" id="RHEA-COMP:14357"/>
        <dbReference type="ChEBI" id="CHEBI:15377"/>
        <dbReference type="ChEBI" id="CHEBI:15903"/>
        <dbReference type="ChEBI" id="CHEBI:59080"/>
        <dbReference type="ChEBI" id="CHEBI:59082"/>
        <dbReference type="EC" id="3.2.1.207"/>
    </reaction>
</comment>
<comment type="pathway">
    <text>Glycan metabolism; N-glycan metabolism.</text>
</comment>
<comment type="subcellular location">
    <subcellularLocation>
        <location evidence="5">Endoplasmic reticulum</location>
    </subcellularLocation>
    <subcellularLocation>
        <location evidence="1">Golgi apparatus</location>
    </subcellularLocation>
</comment>
<comment type="similarity">
    <text evidence="6">Belongs to the glycosyl hydrolase 31 family.</text>
</comment>
<dbReference type="EC" id="3.2.1.207"/>
<dbReference type="EMBL" id="U72236">
    <property type="protein sequence ID" value="AAB18921.1"/>
    <property type="molecule type" value="Genomic_DNA"/>
</dbReference>
<dbReference type="EMBL" id="AAFI02000005">
    <property type="protein sequence ID" value="EAL71927.1"/>
    <property type="molecule type" value="Genomic_DNA"/>
</dbReference>
<dbReference type="RefSeq" id="XP_646169.1">
    <property type="nucleotide sequence ID" value="XM_641077.1"/>
</dbReference>
<dbReference type="SMR" id="Q94502"/>
<dbReference type="FunCoup" id="Q94502">
    <property type="interactions" value="1166"/>
</dbReference>
<dbReference type="STRING" id="44689.Q94502"/>
<dbReference type="CAZy" id="GH31">
    <property type="family name" value="Glycoside Hydrolase Family 31"/>
</dbReference>
<dbReference type="GlyCosmos" id="Q94502">
    <property type="glycosylation" value="3 sites, No reported glycans"/>
</dbReference>
<dbReference type="GlyGen" id="Q94502">
    <property type="glycosylation" value="5 sites"/>
</dbReference>
<dbReference type="PaxDb" id="44689-DDB0191113"/>
<dbReference type="EnsemblProtists" id="EAL71927">
    <property type="protein sequence ID" value="EAL71927"/>
    <property type="gene ID" value="DDB_G0269154"/>
</dbReference>
<dbReference type="GeneID" id="8617122"/>
<dbReference type="KEGG" id="ddi:DDB_G0269154"/>
<dbReference type="dictyBase" id="DDB_G0269154">
    <property type="gene designation" value="modA"/>
</dbReference>
<dbReference type="VEuPathDB" id="AmoebaDB:DDB_G0269154"/>
<dbReference type="eggNOG" id="KOG1066">
    <property type="taxonomic scope" value="Eukaryota"/>
</dbReference>
<dbReference type="HOGENOM" id="CLU_000631_7_0_1"/>
<dbReference type="InParanoid" id="Q94502"/>
<dbReference type="OMA" id="EKPINAG"/>
<dbReference type="PhylomeDB" id="Q94502"/>
<dbReference type="BRENDA" id="3.2.1.207">
    <property type="organism ID" value="1939"/>
</dbReference>
<dbReference type="UniPathway" id="UPA00957"/>
<dbReference type="PRO" id="PR:Q94502"/>
<dbReference type="Proteomes" id="UP000002195">
    <property type="component" value="Chromosome 1"/>
</dbReference>
<dbReference type="GO" id="GO:0005783">
    <property type="term" value="C:endoplasmic reticulum"/>
    <property type="evidence" value="ECO:0000304"/>
    <property type="project" value="dictyBase"/>
</dbReference>
<dbReference type="GO" id="GO:0005794">
    <property type="term" value="C:Golgi apparatus"/>
    <property type="evidence" value="ECO:0007669"/>
    <property type="project" value="UniProtKB-SubCell"/>
</dbReference>
<dbReference type="GO" id="GO:0043231">
    <property type="term" value="C:intracellular membrane-bounded organelle"/>
    <property type="evidence" value="ECO:0000314"/>
    <property type="project" value="dictyBase"/>
</dbReference>
<dbReference type="GO" id="GO:0090599">
    <property type="term" value="F:alpha-glucosidase activity"/>
    <property type="evidence" value="ECO:0000318"/>
    <property type="project" value="GO_Central"/>
</dbReference>
<dbReference type="GO" id="GO:0030246">
    <property type="term" value="F:carbohydrate binding"/>
    <property type="evidence" value="ECO:0007669"/>
    <property type="project" value="InterPro"/>
</dbReference>
<dbReference type="GO" id="GO:0106407">
    <property type="term" value="F:Glc2Man9GlcNAc2 oligosaccharide glucosidase activity"/>
    <property type="evidence" value="ECO:0007669"/>
    <property type="project" value="UniProtKB-EC"/>
</dbReference>
<dbReference type="GO" id="GO:0033919">
    <property type="term" value="F:glucan 1,3-alpha-glucosidase activity"/>
    <property type="evidence" value="ECO:0000315"/>
    <property type="project" value="dictyBase"/>
</dbReference>
<dbReference type="GO" id="GO:0005975">
    <property type="term" value="P:carbohydrate metabolic process"/>
    <property type="evidence" value="ECO:0007669"/>
    <property type="project" value="InterPro"/>
</dbReference>
<dbReference type="GO" id="GO:0006491">
    <property type="term" value="P:N-glycan processing"/>
    <property type="evidence" value="ECO:0000315"/>
    <property type="project" value="dictyBase"/>
</dbReference>
<dbReference type="GO" id="GO:0043687">
    <property type="term" value="P:post-translational protein modification"/>
    <property type="evidence" value="ECO:0000315"/>
    <property type="project" value="dictyBase"/>
</dbReference>
<dbReference type="GO" id="GO:0031288">
    <property type="term" value="P:sorocarp morphogenesis"/>
    <property type="evidence" value="ECO:0000315"/>
    <property type="project" value="dictyBase"/>
</dbReference>
<dbReference type="CDD" id="cd06603">
    <property type="entry name" value="GH31_GANC_GANAB_alpha"/>
    <property type="match status" value="1"/>
</dbReference>
<dbReference type="CDD" id="cd14752">
    <property type="entry name" value="GH31_N"/>
    <property type="match status" value="1"/>
</dbReference>
<dbReference type="FunFam" id="3.20.20.80:FF:000046">
    <property type="entry name" value="Glucosidase alpha, neutral C"/>
    <property type="match status" value="1"/>
</dbReference>
<dbReference type="FunFam" id="3.20.20.80:FF:000039">
    <property type="entry name" value="Glucosidase, alpha neutral C"/>
    <property type="match status" value="1"/>
</dbReference>
<dbReference type="FunFam" id="2.60.40.1760:FF:000002">
    <property type="entry name" value="neutral alpha-glucosidase AB isoform X1"/>
    <property type="match status" value="1"/>
</dbReference>
<dbReference type="FunFam" id="2.60.40.1180:FF:000023">
    <property type="entry name" value="neutral alpha-glucosidase AB isoform X2"/>
    <property type="match status" value="1"/>
</dbReference>
<dbReference type="Gene3D" id="3.20.20.80">
    <property type="entry name" value="Glycosidases"/>
    <property type="match status" value="1"/>
</dbReference>
<dbReference type="Gene3D" id="2.60.40.1760">
    <property type="entry name" value="glycosyl hydrolase (family 31)"/>
    <property type="match status" value="1"/>
</dbReference>
<dbReference type="Gene3D" id="2.60.40.1180">
    <property type="entry name" value="Golgi alpha-mannosidase II"/>
    <property type="match status" value="2"/>
</dbReference>
<dbReference type="InterPro" id="IPR011013">
    <property type="entry name" value="Gal_mutarotase_sf_dom"/>
</dbReference>
<dbReference type="InterPro" id="IPR030458">
    <property type="entry name" value="Glyco_hydro_31_AS"/>
</dbReference>
<dbReference type="InterPro" id="IPR048395">
    <property type="entry name" value="Glyco_hydro_31_C"/>
</dbReference>
<dbReference type="InterPro" id="IPR025887">
    <property type="entry name" value="Glyco_hydro_31_N_dom"/>
</dbReference>
<dbReference type="InterPro" id="IPR000322">
    <property type="entry name" value="Glyco_hydro_31_TIM"/>
</dbReference>
<dbReference type="InterPro" id="IPR013780">
    <property type="entry name" value="Glyco_hydro_b"/>
</dbReference>
<dbReference type="InterPro" id="IPR017853">
    <property type="entry name" value="Glycoside_hydrolase_SF"/>
</dbReference>
<dbReference type="PANTHER" id="PTHR22762">
    <property type="entry name" value="ALPHA-GLUCOSIDASE"/>
    <property type="match status" value="1"/>
</dbReference>
<dbReference type="PANTHER" id="PTHR22762:SF54">
    <property type="entry name" value="BCDNA.GH04962"/>
    <property type="match status" value="1"/>
</dbReference>
<dbReference type="Pfam" id="PF13802">
    <property type="entry name" value="Gal_mutarotas_2"/>
    <property type="match status" value="1"/>
</dbReference>
<dbReference type="Pfam" id="PF01055">
    <property type="entry name" value="Glyco_hydro_31_2nd"/>
    <property type="match status" value="1"/>
</dbReference>
<dbReference type="Pfam" id="PF21365">
    <property type="entry name" value="Glyco_hydro_31_3rd"/>
    <property type="match status" value="1"/>
</dbReference>
<dbReference type="SUPFAM" id="SSF51445">
    <property type="entry name" value="(Trans)glycosidases"/>
    <property type="match status" value="1"/>
</dbReference>
<dbReference type="SUPFAM" id="SSF74650">
    <property type="entry name" value="Galactose mutarotase-like"/>
    <property type="match status" value="1"/>
</dbReference>
<dbReference type="SUPFAM" id="SSF51011">
    <property type="entry name" value="Glycosyl hydrolase domain"/>
    <property type="match status" value="1"/>
</dbReference>
<dbReference type="PROSITE" id="PS00129">
    <property type="entry name" value="GLYCOSYL_HYDROL_F31_1"/>
    <property type="match status" value="1"/>
</dbReference>
<keyword id="KW-0256">Endoplasmic reticulum</keyword>
<keyword id="KW-0325">Glycoprotein</keyword>
<keyword id="KW-0326">Glycosidase</keyword>
<keyword id="KW-0333">Golgi apparatus</keyword>
<keyword id="KW-0378">Hydrolase</keyword>
<keyword id="KW-1185">Reference proteome</keyword>
<keyword id="KW-0732">Signal</keyword>
<protein>
    <recommendedName>
        <fullName>Neutral alpha-glucosidase AB</fullName>
        <ecNumber>3.2.1.207</ecNumber>
    </recommendedName>
    <alternativeName>
        <fullName>Alpha-glucosidase 2</fullName>
    </alternativeName>
    <alternativeName>
        <fullName>Glucosidase II subunit alpha</fullName>
    </alternativeName>
    <alternativeName>
        <fullName>Protein post-translational modification mutant A</fullName>
    </alternativeName>
</protein>